<protein>
    <recommendedName>
        <fullName evidence="1">Methionine aminopeptidase 2-2</fullName>
        <shortName evidence="1">MAP 2-2</shortName>
        <shortName evidence="1">MetAP 2-2</shortName>
        <ecNumber evidence="1">3.4.11.18</ecNumber>
    </recommendedName>
    <alternativeName>
        <fullName evidence="1">Peptidase M</fullName>
    </alternativeName>
</protein>
<reference key="1">
    <citation type="journal article" date="2015" name="Genome Announc.">
        <title>Genome sequence of Aspergillus flavus NRRL 3357, a strain that causes aflatoxin contamination of food and feed.</title>
        <authorList>
            <person name="Nierman W.C."/>
            <person name="Yu J."/>
            <person name="Fedorova-Abrams N.D."/>
            <person name="Losada L."/>
            <person name="Cleveland T.E."/>
            <person name="Bhatnagar D."/>
            <person name="Bennett J.W."/>
            <person name="Dean R."/>
            <person name="Payne G.A."/>
        </authorList>
    </citation>
    <scope>NUCLEOTIDE SEQUENCE [LARGE SCALE GENOMIC DNA]</scope>
    <source>
        <strain>ATCC 200026 / FGSC A1120 / IAM 13836 / NRRL 3357 / JCM 12722 / SRRC 167</strain>
    </source>
</reference>
<dbReference type="EC" id="3.4.11.18" evidence="1"/>
<dbReference type="EMBL" id="EQ963480">
    <property type="protein sequence ID" value="EED49145.1"/>
    <property type="molecule type" value="Genomic_DNA"/>
</dbReference>
<dbReference type="RefSeq" id="XP_002381046.1">
    <property type="nucleotide sequence ID" value="XM_002381005.1"/>
</dbReference>
<dbReference type="SMR" id="B8NLL0"/>
<dbReference type="STRING" id="332952.B8NLL0"/>
<dbReference type="EnsemblFungi" id="EED49145">
    <property type="protein sequence ID" value="EED49145"/>
    <property type="gene ID" value="AFLA_092260"/>
</dbReference>
<dbReference type="VEuPathDB" id="FungiDB:AFLA_009459"/>
<dbReference type="eggNOG" id="KOG2775">
    <property type="taxonomic scope" value="Eukaryota"/>
</dbReference>
<dbReference type="HOGENOM" id="CLU_015857_7_1_1"/>
<dbReference type="OMA" id="ILRYHIH"/>
<dbReference type="GO" id="GO:0005737">
    <property type="term" value="C:cytoplasm"/>
    <property type="evidence" value="ECO:0007669"/>
    <property type="project" value="UniProtKB-SubCell"/>
</dbReference>
<dbReference type="GO" id="GO:0004239">
    <property type="term" value="F:initiator methionyl aminopeptidase activity"/>
    <property type="evidence" value="ECO:0007669"/>
    <property type="project" value="UniProtKB-UniRule"/>
</dbReference>
<dbReference type="GO" id="GO:0046872">
    <property type="term" value="F:metal ion binding"/>
    <property type="evidence" value="ECO:0007669"/>
    <property type="project" value="UniProtKB-UniRule"/>
</dbReference>
<dbReference type="GO" id="GO:0070006">
    <property type="term" value="F:metalloaminopeptidase activity"/>
    <property type="evidence" value="ECO:0007669"/>
    <property type="project" value="UniProtKB-UniRule"/>
</dbReference>
<dbReference type="GO" id="GO:0006508">
    <property type="term" value="P:proteolysis"/>
    <property type="evidence" value="ECO:0007669"/>
    <property type="project" value="UniProtKB-KW"/>
</dbReference>
<dbReference type="CDD" id="cd01088">
    <property type="entry name" value="MetAP2"/>
    <property type="match status" value="1"/>
</dbReference>
<dbReference type="Gene3D" id="3.90.230.10">
    <property type="entry name" value="Creatinase/methionine aminopeptidase superfamily"/>
    <property type="match status" value="1"/>
</dbReference>
<dbReference type="Gene3D" id="1.10.10.10">
    <property type="entry name" value="Winged helix-like DNA-binding domain superfamily/Winged helix DNA-binding domain"/>
    <property type="match status" value="1"/>
</dbReference>
<dbReference type="HAMAP" id="MF_03175">
    <property type="entry name" value="MetAP_2_euk"/>
    <property type="match status" value="1"/>
</dbReference>
<dbReference type="InterPro" id="IPR036005">
    <property type="entry name" value="Creatinase/aminopeptidase-like"/>
</dbReference>
<dbReference type="InterPro" id="IPR050247">
    <property type="entry name" value="Met_Aminopeptidase_Type2"/>
</dbReference>
<dbReference type="InterPro" id="IPR000994">
    <property type="entry name" value="Pept_M24"/>
</dbReference>
<dbReference type="InterPro" id="IPR001714">
    <property type="entry name" value="Pept_M24_MAP"/>
</dbReference>
<dbReference type="InterPro" id="IPR002468">
    <property type="entry name" value="Pept_M24A_MAP2"/>
</dbReference>
<dbReference type="InterPro" id="IPR018349">
    <property type="entry name" value="Pept_M24A_MAP2_BS"/>
</dbReference>
<dbReference type="InterPro" id="IPR036388">
    <property type="entry name" value="WH-like_DNA-bd_sf"/>
</dbReference>
<dbReference type="InterPro" id="IPR036390">
    <property type="entry name" value="WH_DNA-bd_sf"/>
</dbReference>
<dbReference type="NCBIfam" id="TIGR00501">
    <property type="entry name" value="met_pdase_II"/>
    <property type="match status" value="1"/>
</dbReference>
<dbReference type="PANTHER" id="PTHR45777">
    <property type="entry name" value="METHIONINE AMINOPEPTIDASE 2"/>
    <property type="match status" value="1"/>
</dbReference>
<dbReference type="PANTHER" id="PTHR45777:SF1">
    <property type="entry name" value="METHIONINE AMINOPEPTIDASE 2-2"/>
    <property type="match status" value="1"/>
</dbReference>
<dbReference type="Pfam" id="PF00557">
    <property type="entry name" value="Peptidase_M24"/>
    <property type="match status" value="1"/>
</dbReference>
<dbReference type="PRINTS" id="PR00599">
    <property type="entry name" value="MAPEPTIDASE"/>
</dbReference>
<dbReference type="SUPFAM" id="SSF55920">
    <property type="entry name" value="Creatinase/aminopeptidase"/>
    <property type="match status" value="1"/>
</dbReference>
<dbReference type="SUPFAM" id="SSF46785">
    <property type="entry name" value="Winged helix' DNA-binding domain"/>
    <property type="match status" value="1"/>
</dbReference>
<dbReference type="PROSITE" id="PS01202">
    <property type="entry name" value="MAP_2"/>
    <property type="match status" value="1"/>
</dbReference>
<organism>
    <name type="scientific">Aspergillus flavus (strain ATCC 200026 / FGSC A1120 / IAM 13836 / NRRL 3357 / JCM 12722 / SRRC 167)</name>
    <dbReference type="NCBI Taxonomy" id="332952"/>
    <lineage>
        <taxon>Eukaryota</taxon>
        <taxon>Fungi</taxon>
        <taxon>Dikarya</taxon>
        <taxon>Ascomycota</taxon>
        <taxon>Pezizomycotina</taxon>
        <taxon>Eurotiomycetes</taxon>
        <taxon>Eurotiomycetidae</taxon>
        <taxon>Eurotiales</taxon>
        <taxon>Aspergillaceae</taxon>
        <taxon>Aspergillus</taxon>
        <taxon>Aspergillus subgen. Circumdati</taxon>
    </lineage>
</organism>
<sequence>MGSKTFEGEGQRGGNDPSNSTSPNSAGGEPRGAHLSRDGDGSLGDGDGDDGADGDEKDGAVTTTPLTEQQPSSETTSKKKKRRKPKKKISALKQSSPPRVPLDDLFPTGQFPVGETHEYGSVVEGTARTTSEEVRYLSRNYLQDDSVLTDYRKAAEIHRQVRHWTQENVRPGQTLTEIAVGIEDGVRALLDNAGLETGQCLQSGMGFPTGLALNDCVAHYTPNPGQKDIVLQASDVMKVDFGVHINGWIVDSAFTMSFDPTYDNLLAAVKDATNTGIKNAGIDVRISDVSAAIQEAMESYEVEIGGKVFPVKPVRDISGHNINRYQIHGGKSIPFVKNSSQTKMEEGEIFAIETFGSTGRGSTVEGFGVYGYGKDPNAPKKVSSPLASARSLYKTINENFGSIVFCRRYLERLGVERYLAGMNSLVNNGIVEQYAPLMDMKGSYSAQFEHTILLRESCKEVVSRGNDY</sequence>
<comment type="function">
    <text evidence="1">Cotranslationally removes the N-terminal methionine from nascent proteins. The N-terminal methionine is often cleaved when the second residue in the primary sequence is small and uncharged (Met-Ala-, Cys, Gly, Pro, Ser, Thr, or Val).</text>
</comment>
<comment type="catalytic activity">
    <reaction evidence="1">
        <text>Release of N-terminal amino acids, preferentially methionine, from peptides and arylamides.</text>
        <dbReference type="EC" id="3.4.11.18"/>
    </reaction>
</comment>
<comment type="cofactor">
    <cofactor evidence="1">
        <name>Co(2+)</name>
        <dbReference type="ChEBI" id="CHEBI:48828"/>
    </cofactor>
    <cofactor evidence="1">
        <name>Zn(2+)</name>
        <dbReference type="ChEBI" id="CHEBI:29105"/>
    </cofactor>
    <cofactor evidence="1">
        <name>Mn(2+)</name>
        <dbReference type="ChEBI" id="CHEBI:29035"/>
    </cofactor>
    <cofactor evidence="1">
        <name>Fe(2+)</name>
        <dbReference type="ChEBI" id="CHEBI:29033"/>
    </cofactor>
    <text evidence="1">Binds 2 divalent metal cations per subunit. Has a high-affinity and a low affinity metal-binding site. The true nature of the physiological cofactor is under debate. The enzyme is active with cobalt, zinc, manganese or divalent iron ions. Most likely, methionine aminopeptidases function as mononuclear Fe(2+)-metalloproteases under physiological conditions, and the catalytically relevant metal-binding site has been assigned to the histidine-containing high-affinity site.</text>
</comment>
<comment type="subcellular location">
    <subcellularLocation>
        <location evidence="1">Cytoplasm</location>
    </subcellularLocation>
</comment>
<comment type="similarity">
    <text evidence="1">Belongs to the peptidase M24A family. Methionine aminopeptidase eukaryotic type 2 subfamily.</text>
</comment>
<gene>
    <name type="ORF">AFLA_092260</name>
</gene>
<feature type="chain" id="PRO_0000407622" description="Methionine aminopeptidase 2-2">
    <location>
        <begin position="1"/>
        <end position="468"/>
    </location>
</feature>
<feature type="region of interest" description="Disordered" evidence="2">
    <location>
        <begin position="1"/>
        <end position="106"/>
    </location>
</feature>
<feature type="compositionally biased region" description="Basic and acidic residues" evidence="2">
    <location>
        <begin position="1"/>
        <end position="10"/>
    </location>
</feature>
<feature type="compositionally biased region" description="Polar residues" evidence="2">
    <location>
        <begin position="16"/>
        <end position="25"/>
    </location>
</feature>
<feature type="compositionally biased region" description="Basic and acidic residues" evidence="2">
    <location>
        <begin position="31"/>
        <end position="40"/>
    </location>
</feature>
<feature type="compositionally biased region" description="Acidic residues" evidence="2">
    <location>
        <begin position="46"/>
        <end position="56"/>
    </location>
</feature>
<feature type="compositionally biased region" description="Polar residues" evidence="2">
    <location>
        <begin position="61"/>
        <end position="75"/>
    </location>
</feature>
<feature type="compositionally biased region" description="Basic residues" evidence="2">
    <location>
        <begin position="78"/>
        <end position="90"/>
    </location>
</feature>
<feature type="binding site" evidence="1">
    <location>
        <position position="219"/>
    </location>
    <ligand>
        <name>substrate</name>
    </ligand>
</feature>
<feature type="binding site" evidence="1">
    <location>
        <position position="240"/>
    </location>
    <ligand>
        <name>a divalent metal cation</name>
        <dbReference type="ChEBI" id="CHEBI:60240"/>
        <label>1</label>
    </ligand>
</feature>
<feature type="binding site" evidence="1">
    <location>
        <position position="251"/>
    </location>
    <ligand>
        <name>a divalent metal cation</name>
        <dbReference type="ChEBI" id="CHEBI:60240"/>
        <label>1</label>
    </ligand>
</feature>
<feature type="binding site" evidence="1">
    <location>
        <position position="251"/>
    </location>
    <ligand>
        <name>a divalent metal cation</name>
        <dbReference type="ChEBI" id="CHEBI:60240"/>
        <label>2</label>
        <note>catalytic</note>
    </ligand>
</feature>
<feature type="binding site" evidence="1">
    <location>
        <position position="320"/>
    </location>
    <ligand>
        <name>a divalent metal cation</name>
        <dbReference type="ChEBI" id="CHEBI:60240"/>
        <label>2</label>
        <note>catalytic</note>
    </ligand>
</feature>
<feature type="binding site" evidence="1">
    <location>
        <position position="328"/>
    </location>
    <ligand>
        <name>substrate</name>
    </ligand>
</feature>
<feature type="binding site" evidence="1">
    <location>
        <position position="353"/>
    </location>
    <ligand>
        <name>a divalent metal cation</name>
        <dbReference type="ChEBI" id="CHEBI:60240"/>
        <label>2</label>
        <note>catalytic</note>
    </ligand>
</feature>
<feature type="binding site" evidence="1">
    <location>
        <position position="449"/>
    </location>
    <ligand>
        <name>a divalent metal cation</name>
        <dbReference type="ChEBI" id="CHEBI:60240"/>
        <label>1</label>
    </ligand>
</feature>
<feature type="binding site" evidence="1">
    <location>
        <position position="449"/>
    </location>
    <ligand>
        <name>a divalent metal cation</name>
        <dbReference type="ChEBI" id="CHEBI:60240"/>
        <label>2</label>
        <note>catalytic</note>
    </ligand>
</feature>
<keyword id="KW-0031">Aminopeptidase</keyword>
<keyword id="KW-0963">Cytoplasm</keyword>
<keyword id="KW-0378">Hydrolase</keyword>
<keyword id="KW-0479">Metal-binding</keyword>
<keyword id="KW-0645">Protease</keyword>
<accession>B8NLL0</accession>
<proteinExistence type="inferred from homology"/>
<name>MAP22_ASPFN</name>
<evidence type="ECO:0000255" key="1">
    <source>
        <dbReference type="HAMAP-Rule" id="MF_03175"/>
    </source>
</evidence>
<evidence type="ECO:0000256" key="2">
    <source>
        <dbReference type="SAM" id="MobiDB-lite"/>
    </source>
</evidence>